<protein>
    <recommendedName>
        <fullName evidence="1">LexA repressor</fullName>
        <ecNumber evidence="1">3.4.21.88</ecNumber>
    </recommendedName>
</protein>
<feature type="chain" id="PRO_1000001356" description="LexA repressor">
    <location>
        <begin position="1"/>
        <end position="202"/>
    </location>
</feature>
<feature type="DNA-binding region" description="H-T-H motif" evidence="1">
    <location>
        <begin position="28"/>
        <end position="48"/>
    </location>
</feature>
<feature type="active site" description="For autocatalytic cleavage activity" evidence="1">
    <location>
        <position position="119"/>
    </location>
</feature>
<feature type="active site" description="For autocatalytic cleavage activity" evidence="1">
    <location>
        <position position="156"/>
    </location>
</feature>
<feature type="site" description="Cleavage; by autolysis" evidence="1">
    <location>
        <begin position="84"/>
        <end position="85"/>
    </location>
</feature>
<accession>Q1CE98</accession>
<accession>C4GY74</accession>
<proteinExistence type="inferred from homology"/>
<reference key="1">
    <citation type="journal article" date="2006" name="J. Bacteriol.">
        <title>Complete genome sequence of Yersinia pestis strains Antiqua and Nepal516: evidence of gene reduction in an emerging pathogen.</title>
        <authorList>
            <person name="Chain P.S.G."/>
            <person name="Hu P."/>
            <person name="Malfatti S.A."/>
            <person name="Radnedge L."/>
            <person name="Larimer F."/>
            <person name="Vergez L.M."/>
            <person name="Worsham P."/>
            <person name="Chu M.C."/>
            <person name="Andersen G.L."/>
        </authorList>
    </citation>
    <scope>NUCLEOTIDE SEQUENCE [LARGE SCALE GENOMIC DNA]</scope>
    <source>
        <strain>Nepal516</strain>
    </source>
</reference>
<reference key="2">
    <citation type="submission" date="2009-04" db="EMBL/GenBank/DDBJ databases">
        <title>Yersinia pestis Nepal516A whole genome shotgun sequencing project.</title>
        <authorList>
            <person name="Plunkett G. III"/>
            <person name="Anderson B.D."/>
            <person name="Baumler D.J."/>
            <person name="Burland V."/>
            <person name="Cabot E.L."/>
            <person name="Glasner J.D."/>
            <person name="Mau B."/>
            <person name="Neeno-Eckwall E."/>
            <person name="Perna N.T."/>
            <person name="Munk A.C."/>
            <person name="Tapia R."/>
            <person name="Green L.D."/>
            <person name="Rogers Y.C."/>
            <person name="Detter J.C."/>
            <person name="Bruce D.C."/>
            <person name="Brettin T.S."/>
        </authorList>
    </citation>
    <scope>NUCLEOTIDE SEQUENCE [LARGE SCALE GENOMIC DNA]</scope>
    <source>
        <strain>Nepal516</strain>
    </source>
</reference>
<organism>
    <name type="scientific">Yersinia pestis bv. Antiqua (strain Nepal516)</name>
    <dbReference type="NCBI Taxonomy" id="377628"/>
    <lineage>
        <taxon>Bacteria</taxon>
        <taxon>Pseudomonadati</taxon>
        <taxon>Pseudomonadota</taxon>
        <taxon>Gammaproteobacteria</taxon>
        <taxon>Enterobacterales</taxon>
        <taxon>Yersiniaceae</taxon>
        <taxon>Yersinia</taxon>
    </lineage>
</organism>
<dbReference type="EC" id="3.4.21.88" evidence="1"/>
<dbReference type="EMBL" id="CP000305">
    <property type="protein sequence ID" value="ABG19682.1"/>
    <property type="molecule type" value="Genomic_DNA"/>
</dbReference>
<dbReference type="EMBL" id="ACNQ01000017">
    <property type="protein sequence ID" value="EEO75874.1"/>
    <property type="molecule type" value="Genomic_DNA"/>
</dbReference>
<dbReference type="RefSeq" id="WP_002209090.1">
    <property type="nucleotide sequence ID" value="NZ_ACNQ01000017.1"/>
</dbReference>
<dbReference type="SMR" id="Q1CE98"/>
<dbReference type="GeneID" id="57974290"/>
<dbReference type="KEGG" id="ypn:YPN_3355"/>
<dbReference type="HOGENOM" id="CLU_066192_45_3_6"/>
<dbReference type="Proteomes" id="UP000008936">
    <property type="component" value="Chromosome"/>
</dbReference>
<dbReference type="GO" id="GO:0003677">
    <property type="term" value="F:DNA binding"/>
    <property type="evidence" value="ECO:0007669"/>
    <property type="project" value="UniProtKB-UniRule"/>
</dbReference>
<dbReference type="GO" id="GO:0004252">
    <property type="term" value="F:serine-type endopeptidase activity"/>
    <property type="evidence" value="ECO:0007669"/>
    <property type="project" value="UniProtKB-UniRule"/>
</dbReference>
<dbReference type="GO" id="GO:0006281">
    <property type="term" value="P:DNA repair"/>
    <property type="evidence" value="ECO:0007669"/>
    <property type="project" value="UniProtKB-UniRule"/>
</dbReference>
<dbReference type="GO" id="GO:0006260">
    <property type="term" value="P:DNA replication"/>
    <property type="evidence" value="ECO:0007669"/>
    <property type="project" value="UniProtKB-UniRule"/>
</dbReference>
<dbReference type="GO" id="GO:0045892">
    <property type="term" value="P:negative regulation of DNA-templated transcription"/>
    <property type="evidence" value="ECO:0007669"/>
    <property type="project" value="UniProtKB-UniRule"/>
</dbReference>
<dbReference type="GO" id="GO:0006508">
    <property type="term" value="P:proteolysis"/>
    <property type="evidence" value="ECO:0007669"/>
    <property type="project" value="InterPro"/>
</dbReference>
<dbReference type="GO" id="GO:0009432">
    <property type="term" value="P:SOS response"/>
    <property type="evidence" value="ECO:0007669"/>
    <property type="project" value="UniProtKB-UniRule"/>
</dbReference>
<dbReference type="CDD" id="cd06529">
    <property type="entry name" value="S24_LexA-like"/>
    <property type="match status" value="1"/>
</dbReference>
<dbReference type="FunFam" id="1.10.10.10:FF:000009">
    <property type="entry name" value="LexA repressor"/>
    <property type="match status" value="1"/>
</dbReference>
<dbReference type="FunFam" id="2.10.109.10:FF:000001">
    <property type="entry name" value="LexA repressor"/>
    <property type="match status" value="1"/>
</dbReference>
<dbReference type="Gene3D" id="2.10.109.10">
    <property type="entry name" value="Umud Fragment, subunit A"/>
    <property type="match status" value="1"/>
</dbReference>
<dbReference type="Gene3D" id="1.10.10.10">
    <property type="entry name" value="Winged helix-like DNA-binding domain superfamily/Winged helix DNA-binding domain"/>
    <property type="match status" value="1"/>
</dbReference>
<dbReference type="HAMAP" id="MF_00015">
    <property type="entry name" value="LexA"/>
    <property type="match status" value="1"/>
</dbReference>
<dbReference type="InterPro" id="IPR006200">
    <property type="entry name" value="LexA"/>
</dbReference>
<dbReference type="InterPro" id="IPR039418">
    <property type="entry name" value="LexA-like"/>
</dbReference>
<dbReference type="InterPro" id="IPR036286">
    <property type="entry name" value="LexA/Signal_pep-like_sf"/>
</dbReference>
<dbReference type="InterPro" id="IPR006199">
    <property type="entry name" value="LexA_DNA-bd_dom"/>
</dbReference>
<dbReference type="InterPro" id="IPR050077">
    <property type="entry name" value="LexA_repressor"/>
</dbReference>
<dbReference type="InterPro" id="IPR006197">
    <property type="entry name" value="Peptidase_S24_LexA"/>
</dbReference>
<dbReference type="InterPro" id="IPR015927">
    <property type="entry name" value="Peptidase_S24_S26A/B/C"/>
</dbReference>
<dbReference type="InterPro" id="IPR036388">
    <property type="entry name" value="WH-like_DNA-bd_sf"/>
</dbReference>
<dbReference type="InterPro" id="IPR036390">
    <property type="entry name" value="WH_DNA-bd_sf"/>
</dbReference>
<dbReference type="NCBIfam" id="TIGR00498">
    <property type="entry name" value="lexA"/>
    <property type="match status" value="1"/>
</dbReference>
<dbReference type="PANTHER" id="PTHR33516">
    <property type="entry name" value="LEXA REPRESSOR"/>
    <property type="match status" value="1"/>
</dbReference>
<dbReference type="PANTHER" id="PTHR33516:SF2">
    <property type="entry name" value="LEXA REPRESSOR-RELATED"/>
    <property type="match status" value="1"/>
</dbReference>
<dbReference type="Pfam" id="PF01726">
    <property type="entry name" value="LexA_DNA_bind"/>
    <property type="match status" value="1"/>
</dbReference>
<dbReference type="Pfam" id="PF00717">
    <property type="entry name" value="Peptidase_S24"/>
    <property type="match status" value="1"/>
</dbReference>
<dbReference type="PRINTS" id="PR00726">
    <property type="entry name" value="LEXASERPTASE"/>
</dbReference>
<dbReference type="SUPFAM" id="SSF51306">
    <property type="entry name" value="LexA/Signal peptidase"/>
    <property type="match status" value="1"/>
</dbReference>
<dbReference type="SUPFAM" id="SSF46785">
    <property type="entry name" value="Winged helix' DNA-binding domain"/>
    <property type="match status" value="1"/>
</dbReference>
<sequence>MKALTTRQQEVYDLVRDHLAQTGMPPTRAEIAQRLGFRSPNAAEEHLKALARKGVIEIVSGASRGIRLLMEEEEGLPLIGRVAAGEPLLAQQHIEGHYKVDPSLFKPGADFLLRVNGMSMRDIGILDGDLLAVHKTQDVRNGQVVVARIDDEVTVKRLKKQGNIVHLLPENSEFQPIVVDLREQSFTIEGLAVGVIRNGDWI</sequence>
<gene>
    <name evidence="1" type="primary">lexA</name>
    <name type="ordered locus">YPN_3355</name>
    <name type="ORF">YP516_3813</name>
</gene>
<name>LEXA_YERPN</name>
<evidence type="ECO:0000255" key="1">
    <source>
        <dbReference type="HAMAP-Rule" id="MF_00015"/>
    </source>
</evidence>
<keyword id="KW-0068">Autocatalytic cleavage</keyword>
<keyword id="KW-0227">DNA damage</keyword>
<keyword id="KW-0234">DNA repair</keyword>
<keyword id="KW-0235">DNA replication</keyword>
<keyword id="KW-0238">DNA-binding</keyword>
<keyword id="KW-0378">Hydrolase</keyword>
<keyword id="KW-0678">Repressor</keyword>
<keyword id="KW-0742">SOS response</keyword>
<keyword id="KW-0804">Transcription</keyword>
<keyword id="KW-0805">Transcription regulation</keyword>
<comment type="function">
    <text evidence="1">Represses a number of genes involved in the response to DNA damage (SOS response), including recA and lexA. Binds to the 16 bp palindromic sequence 5'-CTGTATATATATACAG-3'. In the presence of single-stranded DNA, RecA interacts with LexA causing an autocatalytic cleavage which disrupts the DNA-binding part of LexA, leading to derepression of the SOS regulon and eventually DNA repair.</text>
</comment>
<comment type="catalytic activity">
    <reaction evidence="1">
        <text>Hydrolysis of Ala-|-Gly bond in repressor LexA.</text>
        <dbReference type="EC" id="3.4.21.88"/>
    </reaction>
</comment>
<comment type="subunit">
    <text evidence="1">Homodimer.</text>
</comment>
<comment type="similarity">
    <text evidence="1">Belongs to the peptidase S24 family.</text>
</comment>